<evidence type="ECO:0000255" key="1">
    <source>
        <dbReference type="HAMAP-Rule" id="MF_00168"/>
    </source>
</evidence>
<protein>
    <recommendedName>
        <fullName evidence="1">Queuine tRNA-ribosyltransferase</fullName>
        <ecNumber evidence="1">2.4.2.29</ecNumber>
    </recommendedName>
    <alternativeName>
        <fullName evidence="1">Guanine insertion enzyme</fullName>
    </alternativeName>
    <alternativeName>
        <fullName evidence="1">tRNA-guanine transglycosylase</fullName>
    </alternativeName>
</protein>
<feature type="chain" id="PRO_1000016833" description="Queuine tRNA-ribosyltransferase">
    <location>
        <begin position="1"/>
        <end position="376"/>
    </location>
</feature>
<feature type="region of interest" description="RNA binding" evidence="1">
    <location>
        <begin position="251"/>
        <end position="257"/>
    </location>
</feature>
<feature type="region of interest" description="RNA binding; important for wobble base 34 recognition" evidence="1">
    <location>
        <begin position="275"/>
        <end position="279"/>
    </location>
</feature>
<feature type="active site" description="Proton acceptor" evidence="1">
    <location>
        <position position="90"/>
    </location>
</feature>
<feature type="active site" description="Nucleophile" evidence="1">
    <location>
        <position position="270"/>
    </location>
</feature>
<feature type="binding site" evidence="1">
    <location>
        <begin position="90"/>
        <end position="94"/>
    </location>
    <ligand>
        <name>substrate</name>
    </ligand>
</feature>
<feature type="binding site" evidence="1">
    <location>
        <position position="144"/>
    </location>
    <ligand>
        <name>substrate</name>
    </ligand>
</feature>
<feature type="binding site" evidence="1">
    <location>
        <position position="193"/>
    </location>
    <ligand>
        <name>substrate</name>
    </ligand>
</feature>
<feature type="binding site" evidence="1">
    <location>
        <position position="220"/>
    </location>
    <ligand>
        <name>substrate</name>
    </ligand>
</feature>
<feature type="binding site" evidence="1">
    <location>
        <position position="308"/>
    </location>
    <ligand>
        <name>Zn(2+)</name>
        <dbReference type="ChEBI" id="CHEBI:29105"/>
    </ligand>
</feature>
<feature type="binding site" evidence="1">
    <location>
        <position position="310"/>
    </location>
    <ligand>
        <name>Zn(2+)</name>
        <dbReference type="ChEBI" id="CHEBI:29105"/>
    </ligand>
</feature>
<feature type="binding site" evidence="1">
    <location>
        <position position="313"/>
    </location>
    <ligand>
        <name>Zn(2+)</name>
        <dbReference type="ChEBI" id="CHEBI:29105"/>
    </ligand>
</feature>
<feature type="binding site" evidence="1">
    <location>
        <position position="339"/>
    </location>
    <ligand>
        <name>Zn(2+)</name>
        <dbReference type="ChEBI" id="CHEBI:29105"/>
    </ligand>
</feature>
<gene>
    <name evidence="1" type="primary">tgt</name>
    <name type="ordered locus">Rmet_2944</name>
</gene>
<sequence length="376" mass="42535">MLNFELLTTDGNARRGRVTLNHGVVETPIFMPVGTYGSVKAMSPLELNEIGAQIILGNTFHLWLRPGLDVVDTHAGLHKFIGWDKPILTDSGGFQVFSLGELRKITEEGVTFASPVNGDKLFLSPEISMQIQRTLNSDIVMQFDECTPYEIDGRPATHDEAARSMRMSLRWAKRSRDEFDHLANPNALFGIVQGGMFEDLRDESLAGLSELDFHGYAIGGLSVGEPKEDMMRVLEHVGPRLPAHKPHYLMGVGTPEDLVAGVAHGVDMFDCVMPTRNARNGWLFTRFGDVKIRNAAHRNDPRPLDEQCGCYTCRNFSRAYLHHLHRVGEILGARLNTIHNLYYYLELMREMRTAIEEHRFEAFRRQFAENRARGTR</sequence>
<keyword id="KW-0328">Glycosyltransferase</keyword>
<keyword id="KW-0479">Metal-binding</keyword>
<keyword id="KW-0671">Queuosine biosynthesis</keyword>
<keyword id="KW-1185">Reference proteome</keyword>
<keyword id="KW-0808">Transferase</keyword>
<keyword id="KW-0819">tRNA processing</keyword>
<keyword id="KW-0862">Zinc</keyword>
<proteinExistence type="inferred from homology"/>
<dbReference type="EC" id="2.4.2.29" evidence="1"/>
<dbReference type="EMBL" id="CP000352">
    <property type="protein sequence ID" value="ABF09817.1"/>
    <property type="molecule type" value="Genomic_DNA"/>
</dbReference>
<dbReference type="RefSeq" id="WP_008641921.1">
    <property type="nucleotide sequence ID" value="NC_007973.1"/>
</dbReference>
<dbReference type="SMR" id="Q1LJ59"/>
<dbReference type="STRING" id="266264.Rmet_2944"/>
<dbReference type="GeneID" id="60820619"/>
<dbReference type="KEGG" id="rme:Rmet_2944"/>
<dbReference type="eggNOG" id="COG0343">
    <property type="taxonomic scope" value="Bacteria"/>
</dbReference>
<dbReference type="HOGENOM" id="CLU_022060_0_1_4"/>
<dbReference type="UniPathway" id="UPA00392"/>
<dbReference type="Proteomes" id="UP000002429">
    <property type="component" value="Chromosome"/>
</dbReference>
<dbReference type="GO" id="GO:0005829">
    <property type="term" value="C:cytosol"/>
    <property type="evidence" value="ECO:0007669"/>
    <property type="project" value="TreeGrafter"/>
</dbReference>
<dbReference type="GO" id="GO:0046872">
    <property type="term" value="F:metal ion binding"/>
    <property type="evidence" value="ECO:0007669"/>
    <property type="project" value="UniProtKB-KW"/>
</dbReference>
<dbReference type="GO" id="GO:0008479">
    <property type="term" value="F:tRNA-guanosine(34) queuine transglycosylase activity"/>
    <property type="evidence" value="ECO:0007669"/>
    <property type="project" value="UniProtKB-UniRule"/>
</dbReference>
<dbReference type="GO" id="GO:0008616">
    <property type="term" value="P:queuosine biosynthetic process"/>
    <property type="evidence" value="ECO:0007669"/>
    <property type="project" value="UniProtKB-UniRule"/>
</dbReference>
<dbReference type="GO" id="GO:0002099">
    <property type="term" value="P:tRNA wobble guanine modification"/>
    <property type="evidence" value="ECO:0007669"/>
    <property type="project" value="TreeGrafter"/>
</dbReference>
<dbReference type="GO" id="GO:0101030">
    <property type="term" value="P:tRNA-guanine transglycosylation"/>
    <property type="evidence" value="ECO:0007669"/>
    <property type="project" value="InterPro"/>
</dbReference>
<dbReference type="FunFam" id="3.20.20.105:FF:000001">
    <property type="entry name" value="Queuine tRNA-ribosyltransferase"/>
    <property type="match status" value="1"/>
</dbReference>
<dbReference type="Gene3D" id="3.20.20.105">
    <property type="entry name" value="Queuine tRNA-ribosyltransferase-like"/>
    <property type="match status" value="1"/>
</dbReference>
<dbReference type="HAMAP" id="MF_00168">
    <property type="entry name" value="Q_tRNA_Tgt"/>
    <property type="match status" value="1"/>
</dbReference>
<dbReference type="InterPro" id="IPR050076">
    <property type="entry name" value="ArchSynthase1/Queuine_TRR"/>
</dbReference>
<dbReference type="InterPro" id="IPR004803">
    <property type="entry name" value="TGT"/>
</dbReference>
<dbReference type="InterPro" id="IPR036511">
    <property type="entry name" value="TGT-like_sf"/>
</dbReference>
<dbReference type="InterPro" id="IPR002616">
    <property type="entry name" value="tRNA_ribo_trans-like"/>
</dbReference>
<dbReference type="NCBIfam" id="TIGR00430">
    <property type="entry name" value="Q_tRNA_tgt"/>
    <property type="match status" value="1"/>
</dbReference>
<dbReference type="NCBIfam" id="TIGR00449">
    <property type="entry name" value="tgt_general"/>
    <property type="match status" value="1"/>
</dbReference>
<dbReference type="PANTHER" id="PTHR46499">
    <property type="entry name" value="QUEUINE TRNA-RIBOSYLTRANSFERASE"/>
    <property type="match status" value="1"/>
</dbReference>
<dbReference type="PANTHER" id="PTHR46499:SF1">
    <property type="entry name" value="QUEUINE TRNA-RIBOSYLTRANSFERASE"/>
    <property type="match status" value="1"/>
</dbReference>
<dbReference type="Pfam" id="PF01702">
    <property type="entry name" value="TGT"/>
    <property type="match status" value="1"/>
</dbReference>
<dbReference type="SUPFAM" id="SSF51713">
    <property type="entry name" value="tRNA-guanine transglycosylase"/>
    <property type="match status" value="1"/>
</dbReference>
<accession>Q1LJ59</accession>
<reference key="1">
    <citation type="journal article" date="2010" name="PLoS ONE">
        <title>The complete genome sequence of Cupriavidus metallidurans strain CH34, a master survivalist in harsh and anthropogenic environments.</title>
        <authorList>
            <person name="Janssen P.J."/>
            <person name="Van Houdt R."/>
            <person name="Moors H."/>
            <person name="Monsieurs P."/>
            <person name="Morin N."/>
            <person name="Michaux A."/>
            <person name="Benotmane M.A."/>
            <person name="Leys N."/>
            <person name="Vallaeys T."/>
            <person name="Lapidus A."/>
            <person name="Monchy S."/>
            <person name="Medigue C."/>
            <person name="Taghavi S."/>
            <person name="McCorkle S."/>
            <person name="Dunn J."/>
            <person name="van der Lelie D."/>
            <person name="Mergeay M."/>
        </authorList>
    </citation>
    <scope>NUCLEOTIDE SEQUENCE [LARGE SCALE GENOMIC DNA]</scope>
    <source>
        <strain>ATCC 43123 / DSM 2839 / NBRC 102507 / CH34</strain>
    </source>
</reference>
<organism>
    <name type="scientific">Cupriavidus metallidurans (strain ATCC 43123 / DSM 2839 / NBRC 102507 / CH34)</name>
    <name type="common">Ralstonia metallidurans</name>
    <dbReference type="NCBI Taxonomy" id="266264"/>
    <lineage>
        <taxon>Bacteria</taxon>
        <taxon>Pseudomonadati</taxon>
        <taxon>Pseudomonadota</taxon>
        <taxon>Betaproteobacteria</taxon>
        <taxon>Burkholderiales</taxon>
        <taxon>Burkholderiaceae</taxon>
        <taxon>Cupriavidus</taxon>
    </lineage>
</organism>
<name>TGT_CUPMC</name>
<comment type="function">
    <text evidence="1">Catalyzes the base-exchange of a guanine (G) residue with the queuine precursor 7-aminomethyl-7-deazaguanine (PreQ1) at position 34 (anticodon wobble position) in tRNAs with GU(N) anticodons (tRNA-Asp, -Asn, -His and -Tyr). Catalysis occurs through a double-displacement mechanism. The nucleophile active site attacks the C1' of nucleotide 34 to detach the guanine base from the RNA, forming a covalent enzyme-RNA intermediate. The proton acceptor active site deprotonates the incoming PreQ1, allowing a nucleophilic attack on the C1' of the ribose to form the product. After dissociation, two additional enzymatic reactions on the tRNA convert PreQ1 to queuine (Q), resulting in the hypermodified nucleoside queuosine (7-(((4,5-cis-dihydroxy-2-cyclopenten-1-yl)amino)methyl)-7-deazaguanosine).</text>
</comment>
<comment type="catalytic activity">
    <reaction evidence="1">
        <text>7-aminomethyl-7-carbaguanine + guanosine(34) in tRNA = 7-aminomethyl-7-carbaguanosine(34) in tRNA + guanine</text>
        <dbReference type="Rhea" id="RHEA:24104"/>
        <dbReference type="Rhea" id="RHEA-COMP:10341"/>
        <dbReference type="Rhea" id="RHEA-COMP:10342"/>
        <dbReference type="ChEBI" id="CHEBI:16235"/>
        <dbReference type="ChEBI" id="CHEBI:58703"/>
        <dbReference type="ChEBI" id="CHEBI:74269"/>
        <dbReference type="ChEBI" id="CHEBI:82833"/>
        <dbReference type="EC" id="2.4.2.29"/>
    </reaction>
</comment>
<comment type="cofactor">
    <cofactor evidence="1">
        <name>Zn(2+)</name>
        <dbReference type="ChEBI" id="CHEBI:29105"/>
    </cofactor>
    <text evidence="1">Binds 1 zinc ion per subunit.</text>
</comment>
<comment type="pathway">
    <text evidence="1">tRNA modification; tRNA-queuosine biosynthesis.</text>
</comment>
<comment type="subunit">
    <text evidence="1">Homodimer. Within each dimer, one monomer is responsible for RNA recognition and catalysis, while the other monomer binds to the replacement base PreQ1.</text>
</comment>
<comment type="similarity">
    <text evidence="1">Belongs to the queuine tRNA-ribosyltransferase family.</text>
</comment>